<keyword id="KW-0175">Coiled coil</keyword>
<keyword id="KW-1032">Host cell membrane</keyword>
<keyword id="KW-1043">Host membrane</keyword>
<keyword id="KW-0472">Membrane</keyword>
<keyword id="KW-0477">Merozoite</keyword>
<keyword id="KW-1185">Reference proteome</keyword>
<feature type="chain" id="PRO_0000356832" description="Repetitive organellar protein">
    <location>
        <begin position="1"/>
        <end position="1979"/>
    </location>
</feature>
<feature type="region of interest" description="Disordered" evidence="3">
    <location>
        <begin position="1"/>
        <end position="42"/>
    </location>
</feature>
<feature type="region of interest" description="Disordered" evidence="3">
    <location>
        <begin position="54"/>
        <end position="116"/>
    </location>
</feature>
<feature type="coiled-coil region" evidence="2">
    <location>
        <begin position="127"/>
        <end position="366"/>
    </location>
</feature>
<feature type="coiled-coil region" evidence="2">
    <location>
        <begin position="412"/>
        <end position="666"/>
    </location>
</feature>
<feature type="coiled-coil region" evidence="2">
    <location>
        <begin position="693"/>
        <end position="876"/>
    </location>
</feature>
<feature type="coiled-coil region" evidence="2">
    <location>
        <begin position="992"/>
        <end position="1094"/>
    </location>
</feature>
<feature type="coiled-coil region" evidence="2">
    <location>
        <begin position="1126"/>
        <end position="1307"/>
    </location>
</feature>
<feature type="coiled-coil region" evidence="2">
    <location>
        <begin position="1398"/>
        <end position="1467"/>
    </location>
</feature>
<feature type="compositionally biased region" description="Basic residues" evidence="3">
    <location>
        <begin position="1"/>
        <end position="12"/>
    </location>
</feature>
<feature type="compositionally biased region" description="Basic and acidic residues" evidence="3">
    <location>
        <begin position="13"/>
        <end position="24"/>
    </location>
</feature>
<feature type="compositionally biased region" description="Basic and acidic residues" evidence="3">
    <location>
        <begin position="31"/>
        <end position="42"/>
    </location>
</feature>
<feature type="compositionally biased region" description="Low complexity" evidence="3">
    <location>
        <begin position="68"/>
        <end position="114"/>
    </location>
</feature>
<organism>
    <name type="scientific">Plasmodium falciparum (isolate 3D7)</name>
    <dbReference type="NCBI Taxonomy" id="36329"/>
    <lineage>
        <taxon>Eukaryota</taxon>
        <taxon>Sar</taxon>
        <taxon>Alveolata</taxon>
        <taxon>Apicomplexa</taxon>
        <taxon>Aconoidasida</taxon>
        <taxon>Haemosporida</taxon>
        <taxon>Plasmodiidae</taxon>
        <taxon>Plasmodium</taxon>
        <taxon>Plasmodium (Laverania)</taxon>
    </lineage>
</organism>
<protein>
    <recommendedName>
        <fullName evidence="1">Repetitive organellar protein</fullName>
    </recommendedName>
</protein>
<reference key="1">
    <citation type="journal article" date="1998" name="Science">
        <title>Chromosome 2 sequence of the human malaria parasite Plasmodium falciparum.</title>
        <authorList>
            <person name="Gardner M.J."/>
            <person name="Tettelin H."/>
            <person name="Carucci D.J."/>
            <person name="Cummings L.M."/>
            <person name="Aravind L."/>
            <person name="Koonin E.V."/>
            <person name="Shallom S.J."/>
            <person name="Mason T."/>
            <person name="Yu K."/>
            <person name="Fujii C."/>
            <person name="Pederson J."/>
            <person name="Shen K."/>
            <person name="Jing J."/>
            <person name="Aston C."/>
            <person name="Lai Z."/>
            <person name="Schwartz D.C."/>
            <person name="Pertea M."/>
            <person name="Salzberg S.L."/>
            <person name="Zhou L."/>
            <person name="Sutton G.G."/>
            <person name="Clayton R."/>
            <person name="White O."/>
            <person name="Smith H.O."/>
            <person name="Fraser C.M."/>
            <person name="Adams M.D."/>
            <person name="Venter J.C."/>
            <person name="Hoffman S.L."/>
        </authorList>
    </citation>
    <scope>NUCLEOTIDE SEQUENCE [LARGE SCALE GENOMIC DNA]</scope>
    <source>
        <strain>3D7</strain>
    </source>
</reference>
<reference key="2">
    <citation type="journal article" date="2002" name="Nature">
        <title>Genome sequence of the human malaria parasite Plasmodium falciparum.</title>
        <authorList>
            <person name="Gardner M.J."/>
            <person name="Hall N."/>
            <person name="Fung E."/>
            <person name="White O."/>
            <person name="Berriman M."/>
            <person name="Hyman R.W."/>
            <person name="Carlton J.M."/>
            <person name="Pain A."/>
            <person name="Nelson K.E."/>
            <person name="Bowman S."/>
            <person name="Paulsen I.T."/>
            <person name="James K.D."/>
            <person name="Eisen J.A."/>
            <person name="Rutherford K.M."/>
            <person name="Salzberg S.L."/>
            <person name="Craig A."/>
            <person name="Kyes S."/>
            <person name="Chan M.-S."/>
            <person name="Nene V."/>
            <person name="Shallom S.J."/>
            <person name="Suh B."/>
            <person name="Peterson J."/>
            <person name="Angiuoli S."/>
            <person name="Pertea M."/>
            <person name="Allen J."/>
            <person name="Selengut J."/>
            <person name="Haft D."/>
            <person name="Mather M.W."/>
            <person name="Vaidya A.B."/>
            <person name="Martin D.M.A."/>
            <person name="Fairlamb A.H."/>
            <person name="Fraunholz M.J."/>
            <person name="Roos D.S."/>
            <person name="Ralph S.A."/>
            <person name="McFadden G.I."/>
            <person name="Cummings L.M."/>
            <person name="Subramanian G.M."/>
            <person name="Mungall C."/>
            <person name="Venter J.C."/>
            <person name="Carucci D.J."/>
            <person name="Hoffman S.L."/>
            <person name="Newbold C."/>
            <person name="Davis R.W."/>
            <person name="Fraser C.M."/>
            <person name="Barrell B.G."/>
        </authorList>
    </citation>
    <scope>NUCLEOTIDE SEQUENCE [LARGE SCALE GENOMIC DNA]</scope>
    <source>
        <strain>3D7</strain>
    </source>
</reference>
<reference evidence="5" key="3">
    <citation type="journal article" date="2007" name="PLoS ONE">
        <title>Rapid identification of malaria vaccine candidates based on alpha-helical coiled coil protein motif.</title>
        <authorList>
            <person name="Villard V."/>
            <person name="Agak G.W."/>
            <person name="Frank G."/>
            <person name="Jafarshad A."/>
            <person name="Servis C."/>
            <person name="Nebie I."/>
            <person name="Sirima S.B."/>
            <person name="Felger I."/>
            <person name="Arevalo-Herrera M."/>
            <person name="Herrera S."/>
            <person name="Heitz F."/>
            <person name="Baecker V."/>
            <person name="Druilhe P."/>
            <person name="Kajava A.V."/>
            <person name="Corradin G."/>
        </authorList>
    </citation>
    <scope>SYNTHESIS OF 140-166; 249-273; 537-561; 575-621; 999-1020; 1126-1224 AND 1252-1276</scope>
    <scope>SUBCELLULAR LOCATION</scope>
    <scope>DEVELOPMENTAL STAGE</scope>
    <scope>POSSIBLE CANDIDATE MALARIA EPITOPE</scope>
</reference>
<name>ROPE_PLAF7</name>
<comment type="subcellular location">
    <subcellularLocation>
        <location evidence="6">Host cell membrane</location>
    </subcellularLocation>
    <text evidence="1 6">In schizonts and free merozoites, localizes to a punctate structure in the cytoplasm which could correspond the rhoptry or another apical organelle (By similarity). Localizes to the cell surface of the host erythrocytes (Probable).</text>
</comment>
<comment type="developmental stage">
    <text evidence="4">Expressed during the asexual blood stage.</text>
</comment>
<comment type="biotechnology">
    <text evidence="4">Possible candidate for an effective malaria vaccine as determined by epitope response in sera.</text>
</comment>
<evidence type="ECO:0000250" key="1">
    <source>
        <dbReference type="UniProtKB" id="Q25662"/>
    </source>
</evidence>
<evidence type="ECO:0000255" key="2"/>
<evidence type="ECO:0000256" key="3">
    <source>
        <dbReference type="SAM" id="MobiDB-lite"/>
    </source>
</evidence>
<evidence type="ECO:0000269" key="4">
    <source>
    </source>
</evidence>
<evidence type="ECO:0000305" key="5"/>
<evidence type="ECO:0000305" key="6">
    <source>
    </source>
</evidence>
<proteinExistence type="evidence at protein level"/>
<sequence>MVFTFKNKKKKKEASSDKVSKESFNEEDNENNEKREKSDSWYKKIIETKGKSKTKYKNDNSLDDNINEDIINNNNNNNNDNNNDNNNDNNNDNNNDNNNDNNNENNNDNNNFNNYSDEISKNIIHKDNELENQLKDTLKSISSLSNKIVNYESKIEELEKELKEVKDKNIDNNDYENKLKEKEDFVKQKIDMLNEKENLLQEKELDINKREKKINEKEKNIIKKEETFHNIEKEYLEKNKERETISIEIIDIKKHLEKLKIEIKEKKEDLENLNKKLLSKENVLKELKGCVKEKNETINSLNDNIIEKEKKYKLLEYELEEKNKQIDLLNKQEKEKEKEKEREKEKEREKEKEKEYDTLIKELKDEKISILEKVHSIKVREMDIEKREHNFLHMEDQLKDLKNSFVKNNNQLKVYKCEIKNLKTELEKKEKELKDIENVSKEEINKLINQLNEKEKQILAFNKNHKEEIHGLKEELKESVKITKIETQELQEMVDIKQKELDQLQEKYNAQIESISIELSKKEKEYNQYKNTYIEEINNLNEKLEETNKEYTNLQNNYTNEINMLNNDIHMLNGNIKTMNTQISTLKNDVHLLNEQIDKLNNEKGTLNSKISELNVQIMDLKEEKDFLNNQIVDLSNQIDLLTRKMEEKENKMLEQENKYKQEMELLRGNIKSSENILNNDEEVCDLKRKLSLKESEMKMMKEEHDKKLAELKDDCDVRIREMNEKNEDKINMLKEEYEDKINTLKEQNEDKINTLKEQNEDKINTLKEEYEHKINTMKEEYEHKINTLNEQNEHKINTLNEQNEHKINTMKEEYEDKMNTLNEQNEDKMNSLKEEYENKINQINSNNEIKIKDVVNEYIEEVDKLKVTLDEKKKQFDKEINYAHIKAHEKEQILLTEMEELKCQRDNKYSDLYEKYIKLIKSICMIINIECCDDIENEDIIRRIEEYINNNKGLKKEVEEKEHKRHSSFNILKSKEKFFKNSIEDKSHELKKKHEKDLLSKDKEIEEKNKKIKELNNDIKKLQDEILVYKKQSNAQQVDHKKKSWILLKDKSKEKIKDKENQINVEKNEEKDLKKKDDEIRILNEELVKYKTILYNLKKDPLLQNQDLLSKIDINSLTINEGMCVDKIEEHILDYDEEINKSRSNLFQLKNEICSLTTEVMELNNKKNELIEENNKLNLVDQGKKKLKKDVEKQKKEIEKLNKQLTKCNKQIDELNEEVEKLNNENIELITYSNDLNNKFDMKENNLMMKLDENEDNIKKMKSKIDDMEKEIKYREDEKKRNLNEINNLKKKNEDMCIKYNEMNIKYGDICVKYEEMSLTYKETSLKYEQIKVKYDEKCSQYDEIRFQYDEKCFQYDEINKKYGALLNINITNKMVDSKVDRNNNEIISVDNKVEGIANYLKQIFELNEEIIRLKGEINKISLLYSNELNEKNSYDINMKHIQEQLLFLEKTNKENEEKIINLTSQYSDAYKKKSDESKLCGAQFVDDVNIYGNISNNNIRTNEYKYEEMFDTNIEEKNGMHLSKYIHLLEENKFRCMKIIYENENIKSSNKIIGLYNYSRYYGLREDLCKEEIVPSKIGNISNKNENNNKKNNTCDGYDEKVTIVLCIILNEIIKFLFLNDEYVLLFEKIHKNVWKRMYIPEEIKFFILKYITLLNNLRDYIISVHNNMKNEKYDECWFLFQHYFERSSDVRKEMVHFLLERKSQENLISFKSKLKSKKEKILTMDILNFSKEHMQLKTIAHLRKEINYEKLSKDTLNRDYNLLLYKYQECVSKLKRVKNLMKEINQNVFIEKYDDISKELDNFSDGYNEQNEQHVMDPILLNNNKNKNNKLITEHNNPIINRLTNFTQNRDSKYKNKIMDDVKQRKINSTMNNTNKNGINIIYNHYENLNKPNYNDNINRLNSYHQNIHIANSIHPNRNQNKSFLTNQANSTYSVMKNYINSDKPNLNGKKSVRNIFNEIVDENVNKTFVHKSVFF</sequence>
<dbReference type="EMBL" id="LN999943">
    <property type="protein sequence ID" value="CZT98043.1"/>
    <property type="molecule type" value="Genomic_DNA"/>
</dbReference>
<dbReference type="PIR" id="C71622">
    <property type="entry name" value="C71622"/>
</dbReference>
<dbReference type="RefSeq" id="XP_001349543.1">
    <property type="nucleotide sequence ID" value="XM_001349507.1"/>
</dbReference>
<dbReference type="SMR" id="O96133"/>
<dbReference type="BioGRID" id="1207947">
    <property type="interactions" value="1"/>
</dbReference>
<dbReference type="FunCoup" id="O96133">
    <property type="interactions" value="208"/>
</dbReference>
<dbReference type="IntAct" id="O96133">
    <property type="interactions" value="1"/>
</dbReference>
<dbReference type="STRING" id="36329.O96133"/>
<dbReference type="PaxDb" id="5833-PFB0145c"/>
<dbReference type="EnsemblProtists" id="CZT98043">
    <property type="protein sequence ID" value="CZT98043"/>
    <property type="gene ID" value="PF3D7_0203000"/>
</dbReference>
<dbReference type="GeneID" id="812625"/>
<dbReference type="KEGG" id="pfa:PF3D7_0203000"/>
<dbReference type="VEuPathDB" id="PlasmoDB:PF3D7_0203000"/>
<dbReference type="HOGENOM" id="CLU_243476_0_0_1"/>
<dbReference type="InParanoid" id="O96133"/>
<dbReference type="OMA" id="RETMNER"/>
<dbReference type="OrthoDB" id="2378640at2759"/>
<dbReference type="PhylomeDB" id="O96133"/>
<dbReference type="Proteomes" id="UP000001450">
    <property type="component" value="Chromosome 2"/>
</dbReference>
<dbReference type="GO" id="GO:0005737">
    <property type="term" value="C:cytoplasm"/>
    <property type="evidence" value="ECO:0000303"/>
    <property type="project" value="UniProtKB"/>
</dbReference>
<dbReference type="GO" id="GO:0020002">
    <property type="term" value="C:host cell plasma membrane"/>
    <property type="evidence" value="ECO:0007669"/>
    <property type="project" value="UniProtKB-SubCell"/>
</dbReference>
<dbReference type="GO" id="GO:0016020">
    <property type="term" value="C:membrane"/>
    <property type="evidence" value="ECO:0000303"/>
    <property type="project" value="UniProtKB"/>
</dbReference>
<dbReference type="Gene3D" id="1.10.287.1490">
    <property type="match status" value="2"/>
</dbReference>
<dbReference type="InterPro" id="IPR052884">
    <property type="entry name" value="VID_Regulator"/>
</dbReference>
<dbReference type="PANTHER" id="PTHR35261">
    <property type="entry name" value="ORGANELLAR PROTEIN, PUTATIVE-RELATED-RELATED"/>
    <property type="match status" value="1"/>
</dbReference>
<dbReference type="PANTHER" id="PTHR35261:SF3">
    <property type="entry name" value="VACUOLAR IMPORT AND DEGRADATION PROTEIN 22"/>
    <property type="match status" value="1"/>
</dbReference>
<dbReference type="SUPFAM" id="SSF90257">
    <property type="entry name" value="Myosin rod fragments"/>
    <property type="match status" value="1"/>
</dbReference>
<gene>
    <name evidence="1" type="primary">ROPE</name>
    <name type="ORF">PF3D7_0203000</name>
    <name type="ORF">PFB0145c</name>
</gene>
<accession>O96133</accession>
<accession>A0A144A0C5</accession>